<sequence length="2148" mass="235786">MEHVTIKQSGTRADPFRVFIFGDQSSCNLSNLQLLLLKKSNIYLASFVDQVNFTLRHEIARLTTAERQSFPAFSSIQNLVTRALKKDKSVALESTLATIYHLCCFLNYFGDGQEAYPTGPNTHISGLCIGALAAAAVSSSKSLAELVQAGIDAVRVSLKVGLLVARTAALFSHQEPNGTSSSPWSYAVPDSQLPLAFAEEAIESYQVKTKIPPLSLPYISAKGQNSWTVSGPPEIVQHFLESSKFEKTLRLTPLAVHAPYHAPHIFSARDVEHIIHAVGPVSNISSKLSFISSSSSCNLPNGVKFQDLLYRAVEDILILSLDLREAAENIRLVLEATDDVQQCVLFPISTTVCPSLKQSFSPVLASRVSIVDCIMESVAANAGPKSTSGPKPSDSKIAIIGMSGRFPESADVEAFWDLLYQGLDVHRPVPPDRFNGESYYDVTGKRKNTCKVMHGCWINEPGLFDAKFFNISPKEAEQSDPGQRLALATAYEALESAGVVADRTPSTQRDRVGVFYGMTSDDYREVSCGQNVDTYFIPGGNRAFTPGKINYFFKYCGPSVSVDTACSSSLAAIHLACNSIWLNECDTAIAGGTNVMTNPDSFVGLDRGYFLSRTGNCHTFDDEADGYCRADAVGTVILKRLEDAIADHDPILGIISGAYTNHSADSVSITRPHSGAQEEIFSKLLTESGVHPHQVSYIEMHGTGTQAGDATEMTSVLNCFAPSTHPRRLPHESLHLGSTKANVGHAESASGVSALIKVLLMMEKNIIPPHCGIKGKINQKFPTDLDERNVHIAKTATQWNRRDEFNNIRRAFVNNFSAAGGNTALLVEDYPLPTVDSSQEDSRTAHVVAVSAKCVKSLKGNLENLKKFVQKQSSIEGFLPKLSYTTTARRMHHPFRVAIPAASSDQLLSALDQELKHESYRCTSESPVAFVFSGQGSQYSAIGRHLLHFTIFRDEVNSYDILAQRHGFPSIMPLIDGSVDIEDLEPLVVQLGTVCVQMALASLWIAFGMRPAYVVGHSLGHYAALKVAGVLTASDTIYLVAMRARLLQNKCSRGSHTMLAIRSSADEMQAYLDEDIYDIACINGPQDTVVSGCIDDIDRLSQKLMDNRIKVTRVNVPFAFHSAQVDPILDELEAIASQVEFHTPRVAIGCPLLGKTFVAGETSSLGADHIKRHCRETVNFRDILRSAKGDGLISEKTAWIEIGPHTVCSTLLRANINQDIVAVPSLMRNKDGWQVLASSVATLYRHGLPVDWDEYHHDFEACKQVLRLPAYSWDNKVYWIHYVYDWLLTRGDPPVQAAASLPAPPSSFSTASVHRIVHESVDKGKLTLTAECEFTSEQLREVVYGHVVNGNRVCSSSLYTDFGVTLGLYILETYRPDLKDHSVDVQDMVVNKALVHKEGSTMLLRINVILDMTDGKAASMSIYSVNSKGDKTADHAQSSLHFEQPKVWLRNWDSTQYYVERSIEWLKEKADQGLNSRMSSGVIYKLFSSLVDYSTAYKGMQEAIVNTEDFEATALVRFQVDEGNFRCNPMWVDSCGQLAGFLMNGHAKTPKDQVFINHGWQSFRTVRKLSKDKTYRTYVRMRCIEGTTYAGDVYIFDNEGIVGVCGGITFQGIPRKVLNTAMPPPKSQNEAQVHSSPAKSRPKPPGSASSVHSGRLARHTNIEPLKLDAALKSATAARDPMQALFKIVSEEIGIPSASVQNDLVFADYGVDSLLSLSISGRLREELDLDVESSVFETCATLADLATHLGFDTFSSDQSSGQSSSCGGLSPRSDSTGEITSNATTPPSLSPRGSVSGSQCKDVCAILAEEIGVSMSEITNDTDLGELGMDSLMSLAVLSRLREELELDLEGDFFVSHPKFSSFKHMFQQGHEDEIEPEPSAELKQYRATSTLLQGNPKSALYTLFLLPDGSGSSFSYAPINAVRKDVCVYGLNCPWLKSAEKLVQFGLKGLATLYVEEIRRRAPHGPYNLGGWSAGGICAYEAAIQFTREGETVERLILLDSPNPIGLEKLPARLFDFVNGLGLFGDGKAPDWLLAHFLAFIDALDEWKPVPWDKALGSNTPPPMTYILWAEDGICKGTDARPEYRDDDPREMKWLLENRTNFGGNNWDVLLGEPALSIERIQDANHFTMLRKGKNTERVAAFIRSTFG</sequence>
<comment type="function">
    <text evidence="1 9">Polyketide synthase; part of the Pks1 gene cluster that mediates the biosynthesis of an anthraquinone derivative pigment that contributes to conidial pigmentation that provides protection from UV radiation, heat and cold stress (PubMed:29958281). The polyketide synthase Pks1 produces 1-acetyl-2,4,6,8-tetrahydroxy-9,10-anthraquinone though condensation of acetyl-CoA with malonyl-CoA (By similarity). The dehydratase EthD and the laccase Mlac1 further convert the anthraquinone derivative into the final conidial pigment (By similarity).</text>
</comment>
<comment type="induction">
    <text evidence="1 9">Highly expressed during conidiation (PubMed:29958281). A conserved conidiation regulatory pathway containing BrlA, AbaA and WetA regulates expression. During conidiation BlrA up-regulates AbaA, which in turn controls WetA. Moreover, the Hog1 MAPK regulates fungal conidiation by controlling the conidiation regulatory pathway, and that all three pigmentation genes Pks1, EthD and Mlac1 exercise feedback regulation of conidiation (By similarity). Expression is also up-regulated in appressoria-forming germlings on locust cuticle (PubMed:29958281).</text>
</comment>
<comment type="domain">
    <text evidence="12">Multidomain protein; including a starter unit:ACP transacylase (SAT) that selects the starter unit; a ketosynthase (KS) that catalyzes repeated decarboxylative condensation to elongate the polyketide backbone; a malonyl-CoA:ACP transacylase (MAT) that selects and transfers the extender unit malonyl-CoA; a product template (PT) domain that controls the immediate cyclization regioselectivity of the reactive polyketide backbone; and an acyl-carrier protein (ACP) that serves as the tether of the growing and completed polyketide via its phosphopantetheinyl arm.</text>
</comment>
<comment type="domain">
    <text evidence="12">The release of the polyketide chain from the non-reducing polyketide synthase is mediated by the thioesterase (TE) domain localized at the C-ter of the protein.</text>
</comment>
<comment type="disruption phenotype">
    <text evidence="9">Results in red conidia.</text>
</comment>
<comment type="sequence caution" evidence="11">
    <conflict type="erroneous gene model prediction">
        <sequence resource="EMBL-CDS" id="EFY88620"/>
    </conflict>
</comment>
<proteinExistence type="evidence at protein level"/>
<reference key="1">
    <citation type="journal article" date="2011" name="PLoS Genet.">
        <title>Genome sequencing and comparative transcriptomics of the model entomopathogenic fungi Metarhizium anisopliae and M. acridum.</title>
        <authorList>
            <person name="Gao Q."/>
            <person name="Jin K."/>
            <person name="Ying S.-H."/>
            <person name="Zhang Y."/>
            <person name="Xiao G."/>
            <person name="Shang Y."/>
            <person name="Duan Z."/>
            <person name="Hu X."/>
            <person name="Xie X.-Q."/>
            <person name="Zhou G."/>
            <person name="Peng G."/>
            <person name="Luo Z."/>
            <person name="Huang W."/>
            <person name="Wang B."/>
            <person name="Fang W."/>
            <person name="Wang S."/>
            <person name="Zhong Y."/>
            <person name="Ma L.-J."/>
            <person name="St Leger R.J."/>
            <person name="Zhao G.-P."/>
            <person name="Pei Y."/>
            <person name="Feng M.-G."/>
            <person name="Xia Y."/>
            <person name="Wang C."/>
        </authorList>
    </citation>
    <scope>NUCLEOTIDE SEQUENCE [LARGE SCALE GENOMIC DNA]</scope>
    <source>
        <strain>CQMa 102</strain>
    </source>
</reference>
<reference key="2">
    <citation type="journal article" date="2018" name="PLoS Genet.">
        <title>Duplication of a Pks gene cluster and subsequent functional diversification facilitate environmental adaptation in Metarhizium species.</title>
        <authorList>
            <person name="Zeng G."/>
            <person name="Zhang P."/>
            <person name="Zhang Q."/>
            <person name="Zhao H."/>
            <person name="Li Z."/>
            <person name="Zhang X."/>
            <person name="Wang C."/>
            <person name="Yin W.B."/>
            <person name="Fang W."/>
        </authorList>
    </citation>
    <scope>NUCLEOTIDE SEQUENCE [MRNA]</scope>
    <scope>DISRUPTION PHENOTYPE</scope>
    <scope>FUNCTION</scope>
    <scope>CATALYTIC ACTIVITY</scope>
    <scope>INDUCTION</scope>
    <scope>DOMAIN</scope>
    <source>
        <strain>CQMa 102</strain>
    </source>
</reference>
<protein>
    <recommendedName>
        <fullName evidence="10">Polyketide synthase 1</fullName>
        <ecNumber evidence="9">2.3.1.-</ecNumber>
    </recommendedName>
    <alternativeName>
        <fullName evidence="10">Conidial pigment biosynthesis polyketide synthase</fullName>
    </alternativeName>
</protein>
<name>PKS1_METAQ</name>
<evidence type="ECO:0000250" key="1">
    <source>
        <dbReference type="UniProtKB" id="E9F646"/>
    </source>
</evidence>
<evidence type="ECO:0000250" key="2">
    <source>
        <dbReference type="UniProtKB" id="Q03149"/>
    </source>
</evidence>
<evidence type="ECO:0000255" key="3"/>
<evidence type="ECO:0000255" key="4">
    <source>
        <dbReference type="PROSITE-ProRule" id="PRU00258"/>
    </source>
</evidence>
<evidence type="ECO:0000255" key="5">
    <source>
        <dbReference type="PROSITE-ProRule" id="PRU01348"/>
    </source>
</evidence>
<evidence type="ECO:0000255" key="6">
    <source>
        <dbReference type="PROSITE-ProRule" id="PRU01363"/>
    </source>
</evidence>
<evidence type="ECO:0000255" key="7">
    <source>
        <dbReference type="PROSITE-ProRule" id="PRU10022"/>
    </source>
</evidence>
<evidence type="ECO:0000256" key="8">
    <source>
        <dbReference type="SAM" id="MobiDB-lite"/>
    </source>
</evidence>
<evidence type="ECO:0000269" key="9">
    <source>
    </source>
</evidence>
<evidence type="ECO:0000303" key="10">
    <source>
    </source>
</evidence>
<evidence type="ECO:0000305" key="11"/>
<evidence type="ECO:0000305" key="12">
    <source>
    </source>
</evidence>
<gene>
    <name evidence="10" type="primary">Pks1</name>
    <name type="ORF">MAC_05385</name>
</gene>
<dbReference type="EC" id="2.3.1.-" evidence="9"/>
<dbReference type="EMBL" id="MG385100">
    <property type="protein sequence ID" value="AWL82990.1"/>
    <property type="molecule type" value="mRNA"/>
</dbReference>
<dbReference type="EMBL" id="GL698509">
    <property type="protein sequence ID" value="EFY88620.1"/>
    <property type="status" value="ALT_SEQ"/>
    <property type="molecule type" value="Genomic_DNA"/>
</dbReference>
<dbReference type="RefSeq" id="XP_007811725.1">
    <property type="nucleotide sequence ID" value="XM_007813534.1"/>
</dbReference>
<dbReference type="SMR" id="A0A2U8NEV6"/>
<dbReference type="STRING" id="655827.A0A2U8NEV6"/>
<dbReference type="ESTHER" id="metaq-pks1">
    <property type="family name" value="Thioesterase"/>
</dbReference>
<dbReference type="eggNOG" id="KOG1202">
    <property type="taxonomic scope" value="Eukaryota"/>
</dbReference>
<dbReference type="HOGENOM" id="CLU_000022_6_0_1"/>
<dbReference type="InParanoid" id="A0A2U8NEV6"/>
<dbReference type="OrthoDB" id="329835at2759"/>
<dbReference type="Proteomes" id="UP000002499">
    <property type="component" value="Unassembled WGS sequence"/>
</dbReference>
<dbReference type="GO" id="GO:0004315">
    <property type="term" value="F:3-oxoacyl-[acyl-carrier-protein] synthase activity"/>
    <property type="evidence" value="ECO:0007669"/>
    <property type="project" value="InterPro"/>
</dbReference>
<dbReference type="GO" id="GO:0004312">
    <property type="term" value="F:fatty acid synthase activity"/>
    <property type="evidence" value="ECO:0007669"/>
    <property type="project" value="TreeGrafter"/>
</dbReference>
<dbReference type="GO" id="GO:0031177">
    <property type="term" value="F:phosphopantetheine binding"/>
    <property type="evidence" value="ECO:0007669"/>
    <property type="project" value="InterPro"/>
</dbReference>
<dbReference type="GO" id="GO:0006633">
    <property type="term" value="P:fatty acid biosynthetic process"/>
    <property type="evidence" value="ECO:0007669"/>
    <property type="project" value="InterPro"/>
</dbReference>
<dbReference type="GO" id="GO:0046189">
    <property type="term" value="P:phenol-containing compound biosynthetic process"/>
    <property type="evidence" value="ECO:0007669"/>
    <property type="project" value="UniProtKB-ARBA"/>
</dbReference>
<dbReference type="GO" id="GO:0030639">
    <property type="term" value="P:polyketide biosynthetic process"/>
    <property type="evidence" value="ECO:0007669"/>
    <property type="project" value="UniProtKB-ARBA"/>
</dbReference>
<dbReference type="GO" id="GO:0009403">
    <property type="term" value="P:toxin biosynthetic process"/>
    <property type="evidence" value="ECO:0007669"/>
    <property type="project" value="UniProtKB-ARBA"/>
</dbReference>
<dbReference type="CDD" id="cd00833">
    <property type="entry name" value="PKS"/>
    <property type="match status" value="1"/>
</dbReference>
<dbReference type="FunFam" id="1.10.1200.10:FF:000011">
    <property type="entry name" value="Sterigmatocystin biosynthesis polyketide synthase"/>
    <property type="match status" value="1"/>
</dbReference>
<dbReference type="FunFam" id="3.10.129.110:FF:000001">
    <property type="entry name" value="Sterigmatocystin biosynthesis polyketide synthase"/>
    <property type="match status" value="1"/>
</dbReference>
<dbReference type="FunFam" id="3.40.47.10:FF:000031">
    <property type="entry name" value="Sterigmatocystin biosynthesis polyketide synthase"/>
    <property type="match status" value="1"/>
</dbReference>
<dbReference type="FunFam" id="3.40.50.1820:FF:000116">
    <property type="entry name" value="Sterigmatocystin biosynthesis polyketide synthase"/>
    <property type="match status" value="1"/>
</dbReference>
<dbReference type="Gene3D" id="3.30.70.3290">
    <property type="match status" value="1"/>
</dbReference>
<dbReference type="Gene3D" id="3.40.47.10">
    <property type="match status" value="1"/>
</dbReference>
<dbReference type="Gene3D" id="1.10.1200.10">
    <property type="entry name" value="ACP-like"/>
    <property type="match status" value="2"/>
</dbReference>
<dbReference type="Gene3D" id="3.40.50.1820">
    <property type="entry name" value="alpha/beta hydrolase"/>
    <property type="match status" value="1"/>
</dbReference>
<dbReference type="Gene3D" id="3.40.366.10">
    <property type="entry name" value="Malonyl-Coenzyme A Acyl Carrier Protein, domain 2"/>
    <property type="match status" value="2"/>
</dbReference>
<dbReference type="Gene3D" id="3.10.129.110">
    <property type="entry name" value="Polyketide synthase dehydratase"/>
    <property type="match status" value="1"/>
</dbReference>
<dbReference type="InterPro" id="IPR029058">
    <property type="entry name" value="AB_hydrolase_fold"/>
</dbReference>
<dbReference type="InterPro" id="IPR001227">
    <property type="entry name" value="Ac_transferase_dom_sf"/>
</dbReference>
<dbReference type="InterPro" id="IPR036736">
    <property type="entry name" value="ACP-like_sf"/>
</dbReference>
<dbReference type="InterPro" id="IPR014043">
    <property type="entry name" value="Acyl_transferase_dom"/>
</dbReference>
<dbReference type="InterPro" id="IPR016035">
    <property type="entry name" value="Acyl_Trfase/lysoPLipase"/>
</dbReference>
<dbReference type="InterPro" id="IPR018201">
    <property type="entry name" value="Ketoacyl_synth_AS"/>
</dbReference>
<dbReference type="InterPro" id="IPR014031">
    <property type="entry name" value="Ketoacyl_synth_C"/>
</dbReference>
<dbReference type="InterPro" id="IPR014030">
    <property type="entry name" value="Ketoacyl_synth_N"/>
</dbReference>
<dbReference type="InterPro" id="IPR016036">
    <property type="entry name" value="Malonyl_transacylase_ACP-bd"/>
</dbReference>
<dbReference type="InterPro" id="IPR020841">
    <property type="entry name" value="PKS_Beta-ketoAc_synthase_dom"/>
</dbReference>
<dbReference type="InterPro" id="IPR042104">
    <property type="entry name" value="PKS_dehydratase_sf"/>
</dbReference>
<dbReference type="InterPro" id="IPR049551">
    <property type="entry name" value="PKS_DH_C"/>
</dbReference>
<dbReference type="InterPro" id="IPR049900">
    <property type="entry name" value="PKS_mFAS_DH"/>
</dbReference>
<dbReference type="InterPro" id="IPR050091">
    <property type="entry name" value="PKS_NRPS_Biosynth_Enz"/>
</dbReference>
<dbReference type="InterPro" id="IPR020806">
    <property type="entry name" value="PKS_PP-bd"/>
</dbReference>
<dbReference type="InterPro" id="IPR009081">
    <property type="entry name" value="PP-bd_ACP"/>
</dbReference>
<dbReference type="InterPro" id="IPR006162">
    <property type="entry name" value="Ppantetheine_attach_site"/>
</dbReference>
<dbReference type="InterPro" id="IPR030918">
    <property type="entry name" value="PT_fungal_PKS"/>
</dbReference>
<dbReference type="InterPro" id="IPR032088">
    <property type="entry name" value="SAT"/>
</dbReference>
<dbReference type="InterPro" id="IPR001031">
    <property type="entry name" value="Thioesterase"/>
</dbReference>
<dbReference type="InterPro" id="IPR016039">
    <property type="entry name" value="Thiolase-like"/>
</dbReference>
<dbReference type="NCBIfam" id="TIGR04532">
    <property type="entry name" value="PT_fungal_PKS"/>
    <property type="match status" value="1"/>
</dbReference>
<dbReference type="PANTHER" id="PTHR43775:SF45">
    <property type="entry name" value="CONIDIAL PIGMENT POLYKETIDE SYNTHASE ALB1"/>
    <property type="match status" value="1"/>
</dbReference>
<dbReference type="PANTHER" id="PTHR43775">
    <property type="entry name" value="FATTY ACID SYNTHASE"/>
    <property type="match status" value="1"/>
</dbReference>
<dbReference type="Pfam" id="PF00698">
    <property type="entry name" value="Acyl_transf_1"/>
    <property type="match status" value="1"/>
</dbReference>
<dbReference type="Pfam" id="PF00109">
    <property type="entry name" value="ketoacyl-synt"/>
    <property type="match status" value="1"/>
</dbReference>
<dbReference type="Pfam" id="PF02801">
    <property type="entry name" value="Ketoacyl-synt_C"/>
    <property type="match status" value="1"/>
</dbReference>
<dbReference type="Pfam" id="PF00550">
    <property type="entry name" value="PP-binding"/>
    <property type="match status" value="2"/>
</dbReference>
<dbReference type="Pfam" id="PF14765">
    <property type="entry name" value="PS-DH"/>
    <property type="match status" value="1"/>
</dbReference>
<dbReference type="Pfam" id="PF16073">
    <property type="entry name" value="SAT"/>
    <property type="match status" value="1"/>
</dbReference>
<dbReference type="Pfam" id="PF00975">
    <property type="entry name" value="Thioesterase"/>
    <property type="match status" value="1"/>
</dbReference>
<dbReference type="SMART" id="SM00827">
    <property type="entry name" value="PKS_AT"/>
    <property type="match status" value="1"/>
</dbReference>
<dbReference type="SMART" id="SM00825">
    <property type="entry name" value="PKS_KS"/>
    <property type="match status" value="1"/>
</dbReference>
<dbReference type="SMART" id="SM00823">
    <property type="entry name" value="PKS_PP"/>
    <property type="match status" value="2"/>
</dbReference>
<dbReference type="SUPFAM" id="SSF47336">
    <property type="entry name" value="ACP-like"/>
    <property type="match status" value="2"/>
</dbReference>
<dbReference type="SUPFAM" id="SSF53474">
    <property type="entry name" value="alpha/beta-Hydrolases"/>
    <property type="match status" value="1"/>
</dbReference>
<dbReference type="SUPFAM" id="SSF52151">
    <property type="entry name" value="FabD/lysophospholipase-like"/>
    <property type="match status" value="1"/>
</dbReference>
<dbReference type="SUPFAM" id="SSF55048">
    <property type="entry name" value="Probable ACP-binding domain of malonyl-CoA ACP transacylase"/>
    <property type="match status" value="1"/>
</dbReference>
<dbReference type="SUPFAM" id="SSF53901">
    <property type="entry name" value="Thiolase-like"/>
    <property type="match status" value="1"/>
</dbReference>
<dbReference type="PROSITE" id="PS50075">
    <property type="entry name" value="CARRIER"/>
    <property type="match status" value="2"/>
</dbReference>
<dbReference type="PROSITE" id="PS00606">
    <property type="entry name" value="KS3_1"/>
    <property type="match status" value="1"/>
</dbReference>
<dbReference type="PROSITE" id="PS52004">
    <property type="entry name" value="KS3_2"/>
    <property type="match status" value="1"/>
</dbReference>
<dbReference type="PROSITE" id="PS00012">
    <property type="entry name" value="PHOSPHOPANTETHEINE"/>
    <property type="match status" value="1"/>
</dbReference>
<dbReference type="PROSITE" id="PS52019">
    <property type="entry name" value="PKS_MFAS_DH"/>
    <property type="match status" value="1"/>
</dbReference>
<keyword id="KW-0511">Multifunctional enzyme</keyword>
<keyword id="KW-0596">Phosphopantetheine</keyword>
<keyword id="KW-0597">Phosphoprotein</keyword>
<keyword id="KW-1185">Reference proteome</keyword>
<keyword id="KW-0677">Repeat</keyword>
<keyword id="KW-0808">Transferase</keyword>
<feature type="chain" id="PRO_0000445741" description="Polyketide synthase 1">
    <location>
        <begin position="1"/>
        <end position="2148"/>
    </location>
</feature>
<feature type="domain" description="Ketosynthase family 3 (KS3)" evidence="5 12">
    <location>
        <begin position="394"/>
        <end position="829"/>
    </location>
</feature>
<feature type="domain" description="PKS/mFAS DH" evidence="6">
    <location>
        <begin position="1314"/>
        <end position="1619"/>
    </location>
</feature>
<feature type="domain" description="Carrier 1" evidence="4 12">
    <location>
        <begin position="1678"/>
        <end position="1752"/>
    </location>
</feature>
<feature type="domain" description="Carrier 2" evidence="4 12">
    <location>
        <begin position="1793"/>
        <end position="1870"/>
    </location>
</feature>
<feature type="region of interest" description="N-terminal acylcarrier protein transacylase domain (SAT)" evidence="3 12">
    <location>
        <begin position="19"/>
        <end position="261"/>
    </location>
</feature>
<feature type="region of interest" description="Malonyl-CoA:ACP transacylase (MAT) domain" evidence="3 12">
    <location>
        <begin position="929"/>
        <end position="1233"/>
    </location>
</feature>
<feature type="region of interest" description="Product template (PT) domain" evidence="3 12">
    <location>
        <begin position="1310"/>
        <end position="1624"/>
    </location>
</feature>
<feature type="region of interest" description="N-terminal hotdog fold" evidence="6">
    <location>
        <begin position="1314"/>
        <end position="1447"/>
    </location>
</feature>
<feature type="region of interest" description="C-terminal hotdog fold" evidence="6">
    <location>
        <begin position="1474"/>
        <end position="1619"/>
    </location>
</feature>
<feature type="region of interest" description="Disordered" evidence="8">
    <location>
        <begin position="1619"/>
        <end position="1655"/>
    </location>
</feature>
<feature type="region of interest" description="Disordered" evidence="8">
    <location>
        <begin position="1756"/>
        <end position="1796"/>
    </location>
</feature>
<feature type="region of interest" description="Thioesterase (TE) domain" evidence="3 12">
    <location>
        <begin position="1882"/>
        <end position="2146"/>
    </location>
</feature>
<feature type="compositionally biased region" description="Polar residues" evidence="8">
    <location>
        <begin position="1627"/>
        <end position="1638"/>
    </location>
</feature>
<feature type="compositionally biased region" description="Low complexity" evidence="8">
    <location>
        <begin position="1756"/>
        <end position="1769"/>
    </location>
</feature>
<feature type="compositionally biased region" description="Polar residues" evidence="8">
    <location>
        <begin position="1771"/>
        <end position="1796"/>
    </location>
</feature>
<feature type="active site" description="For beta-ketoacyl synthase activity" evidence="5">
    <location>
        <position position="566"/>
    </location>
</feature>
<feature type="active site" description="For beta-ketoacyl synthase activity" evidence="5">
    <location>
        <position position="701"/>
    </location>
</feature>
<feature type="active site" description="For beta-ketoacyl synthase activity" evidence="5">
    <location>
        <position position="745"/>
    </location>
</feature>
<feature type="active site" description="For acyl/malonyl transferase activity" evidence="7">
    <location>
        <position position="1018"/>
    </location>
</feature>
<feature type="active site" description="Proton acceptor; for dehydratase activity" evidence="6">
    <location>
        <position position="1346"/>
    </location>
</feature>
<feature type="active site" description="Proton donor; for dehydratase activity" evidence="6">
    <location>
        <position position="1533"/>
    </location>
</feature>
<feature type="active site" description="For thioesterase activity" evidence="2">
    <location>
        <position position="1973"/>
    </location>
</feature>
<feature type="modified residue" description="O-(pantetheine 4'-phosphoryl)serine" evidence="4">
    <location>
        <position position="1712"/>
    </location>
</feature>
<feature type="modified residue" description="O-(pantetheine 4'-phosphoryl)serine" evidence="4">
    <location>
        <position position="1830"/>
    </location>
</feature>
<accession>A0A2U8NEV6</accession>
<accession>E9E687</accession>
<organism>
    <name type="scientific">Metarhizium acridum (strain CQMa 102)</name>
    <dbReference type="NCBI Taxonomy" id="655827"/>
    <lineage>
        <taxon>Eukaryota</taxon>
        <taxon>Fungi</taxon>
        <taxon>Dikarya</taxon>
        <taxon>Ascomycota</taxon>
        <taxon>Pezizomycotina</taxon>
        <taxon>Sordariomycetes</taxon>
        <taxon>Hypocreomycetidae</taxon>
        <taxon>Hypocreales</taxon>
        <taxon>Clavicipitaceae</taxon>
        <taxon>Metarhizium</taxon>
    </lineage>
</organism>